<feature type="chain" id="PRO_1000114707" description="Potassium-transporting ATPase potassium-binding subunit">
    <location>
        <begin position="1"/>
        <end position="554"/>
    </location>
</feature>
<feature type="transmembrane region" description="Helical" evidence="1">
    <location>
        <begin position="1"/>
        <end position="21"/>
    </location>
</feature>
<feature type="transmembrane region" description="Helical" evidence="1">
    <location>
        <begin position="59"/>
        <end position="79"/>
    </location>
</feature>
<feature type="transmembrane region" description="Helical" evidence="1">
    <location>
        <begin position="131"/>
        <end position="151"/>
    </location>
</feature>
<feature type="transmembrane region" description="Helical" evidence="1">
    <location>
        <begin position="174"/>
        <end position="194"/>
    </location>
</feature>
<feature type="transmembrane region" description="Helical" evidence="1">
    <location>
        <begin position="246"/>
        <end position="266"/>
    </location>
</feature>
<feature type="transmembrane region" description="Helical" evidence="1">
    <location>
        <begin position="279"/>
        <end position="299"/>
    </location>
</feature>
<feature type="transmembrane region" description="Helical" evidence="1">
    <location>
        <begin position="323"/>
        <end position="343"/>
    </location>
</feature>
<feature type="transmembrane region" description="Helical" evidence="1">
    <location>
        <begin position="352"/>
        <end position="372"/>
    </location>
</feature>
<feature type="transmembrane region" description="Helical" evidence="1">
    <location>
        <begin position="375"/>
        <end position="395"/>
    </location>
</feature>
<feature type="transmembrane region" description="Helical" evidence="1">
    <location>
        <begin position="412"/>
        <end position="432"/>
    </location>
</feature>
<feature type="transmembrane region" description="Helical" evidence="1">
    <location>
        <begin position="481"/>
        <end position="501"/>
    </location>
</feature>
<feature type="transmembrane region" description="Helical" evidence="1">
    <location>
        <begin position="525"/>
        <end position="545"/>
    </location>
</feature>
<sequence length="554" mass="58109">MSSQVAGLLQLTALIAALALAYRPLGDYMARVYSSEKHYRPEKWMYKAIGANPAAEMRWPAYLRGVLAFSAMSVLFLYLMQRVQGSLPGSLGFSSIDPDQAFNTAASFVANTNWQSYYGEQAMGHVVQTGGLAVQNFLSAAVGMAVAVALVRGFARSRTGELGNFWADLVRGTVRILVPISVIGAIVLVAAGAIQNFSGIHQVGQFAGGTQEWNGGAVASQEAIKELGTNGGGYFNANSAHPFENPNPLSNLFEVFLILLIPFALTRTFGRMAGSLKQGYAILGAMAVIWIGFTALMMWTEFAHRGPAFEIAGGAMEGKEARFGIAGSSIFAVATTLTSTGAVNSFHSSYTGFGGGITLLGMQLGEIAPGGVGSGLYGMLIMAIIAVFIAGLMVGRTPEYLGKKIGTRQIKFAACYILITPALVLGFTAVAMALPTPADSMTNSGAHGFSEILYAYTSGANNNGSAFAGLNADTQWFNTTIGIAMLLGRFLPMVFVLALAGSLAEQQPVPETAGTLRTDKPLYSGLLVGTILIITGLTYFPALALGPLAEGLAS</sequence>
<protein>
    <recommendedName>
        <fullName evidence="1">Potassium-transporting ATPase potassium-binding subunit</fullName>
    </recommendedName>
    <alternativeName>
        <fullName evidence="1">ATP phosphohydrolase [potassium-transporting] A chain</fullName>
    </alternativeName>
    <alternativeName>
        <fullName evidence="1">Potassium-binding and translocating subunit A</fullName>
    </alternativeName>
    <alternativeName>
        <fullName evidence="1">Potassium-translocating ATPase A chain</fullName>
    </alternativeName>
</protein>
<gene>
    <name evidence="1" type="primary">kdpA</name>
    <name type="ordered locus">SGR_2679</name>
</gene>
<organism>
    <name type="scientific">Streptomyces griseus subsp. griseus (strain JCM 4626 / CBS 651.72 / NBRC 13350 / KCC S-0626 / ISP 5235)</name>
    <dbReference type="NCBI Taxonomy" id="455632"/>
    <lineage>
        <taxon>Bacteria</taxon>
        <taxon>Bacillati</taxon>
        <taxon>Actinomycetota</taxon>
        <taxon>Actinomycetes</taxon>
        <taxon>Kitasatosporales</taxon>
        <taxon>Streptomycetaceae</taxon>
        <taxon>Streptomyces</taxon>
    </lineage>
</organism>
<name>KDPA_STRGG</name>
<evidence type="ECO:0000255" key="1">
    <source>
        <dbReference type="HAMAP-Rule" id="MF_00275"/>
    </source>
</evidence>
<keyword id="KW-1003">Cell membrane</keyword>
<keyword id="KW-0406">Ion transport</keyword>
<keyword id="KW-0472">Membrane</keyword>
<keyword id="KW-0630">Potassium</keyword>
<keyword id="KW-0633">Potassium transport</keyword>
<keyword id="KW-0812">Transmembrane</keyword>
<keyword id="KW-1133">Transmembrane helix</keyword>
<keyword id="KW-0813">Transport</keyword>
<proteinExistence type="inferred from homology"/>
<comment type="function">
    <text evidence="1">Part of the high-affinity ATP-driven potassium transport (or Kdp) system, which catalyzes the hydrolysis of ATP coupled with the electrogenic transport of potassium into the cytoplasm. This subunit binds the extracellular potassium ions and delivers the ions to the membrane domain of KdpB through an intramembrane tunnel.</text>
</comment>
<comment type="subunit">
    <text evidence="1">The system is composed of three essential subunits: KdpA, KdpB and KdpC.</text>
</comment>
<comment type="subcellular location">
    <subcellularLocation>
        <location evidence="1">Cell membrane</location>
        <topology evidence="1">Multi-pass membrane protein</topology>
    </subcellularLocation>
</comment>
<comment type="similarity">
    <text evidence="1">Belongs to the KdpA family.</text>
</comment>
<accession>B1W3K2</accession>
<reference key="1">
    <citation type="journal article" date="2008" name="J. Bacteriol.">
        <title>Genome sequence of the streptomycin-producing microorganism Streptomyces griseus IFO 13350.</title>
        <authorList>
            <person name="Ohnishi Y."/>
            <person name="Ishikawa J."/>
            <person name="Hara H."/>
            <person name="Suzuki H."/>
            <person name="Ikenoya M."/>
            <person name="Ikeda H."/>
            <person name="Yamashita A."/>
            <person name="Hattori M."/>
            <person name="Horinouchi S."/>
        </authorList>
    </citation>
    <scope>NUCLEOTIDE SEQUENCE [LARGE SCALE GENOMIC DNA]</scope>
    <source>
        <strain>JCM 4626 / CBS 651.72 / NBRC 13350 / KCC S-0626 / ISP 5235</strain>
    </source>
</reference>
<dbReference type="EMBL" id="AP009493">
    <property type="protein sequence ID" value="BAG19508.1"/>
    <property type="molecule type" value="Genomic_DNA"/>
</dbReference>
<dbReference type="RefSeq" id="WP_012379377.1">
    <property type="nucleotide sequence ID" value="NC_010572.1"/>
</dbReference>
<dbReference type="SMR" id="B1W3K2"/>
<dbReference type="KEGG" id="sgr:SGR_2679"/>
<dbReference type="PATRIC" id="fig|455632.4.peg.2729"/>
<dbReference type="eggNOG" id="COG2060">
    <property type="taxonomic scope" value="Bacteria"/>
</dbReference>
<dbReference type="HOGENOM" id="CLU_018614_3_0_11"/>
<dbReference type="Proteomes" id="UP000001685">
    <property type="component" value="Chromosome"/>
</dbReference>
<dbReference type="GO" id="GO:0005886">
    <property type="term" value="C:plasma membrane"/>
    <property type="evidence" value="ECO:0007669"/>
    <property type="project" value="UniProtKB-SubCell"/>
</dbReference>
<dbReference type="GO" id="GO:0008556">
    <property type="term" value="F:P-type potassium transmembrane transporter activity"/>
    <property type="evidence" value="ECO:0007669"/>
    <property type="project" value="InterPro"/>
</dbReference>
<dbReference type="GO" id="GO:0030955">
    <property type="term" value="F:potassium ion binding"/>
    <property type="evidence" value="ECO:0007669"/>
    <property type="project" value="UniProtKB-UniRule"/>
</dbReference>
<dbReference type="HAMAP" id="MF_00275">
    <property type="entry name" value="KdpA"/>
    <property type="match status" value="1"/>
</dbReference>
<dbReference type="InterPro" id="IPR004623">
    <property type="entry name" value="KdpA"/>
</dbReference>
<dbReference type="NCBIfam" id="TIGR00680">
    <property type="entry name" value="kdpA"/>
    <property type="match status" value="1"/>
</dbReference>
<dbReference type="PANTHER" id="PTHR30607">
    <property type="entry name" value="POTASSIUM-TRANSPORTING ATPASE A CHAIN"/>
    <property type="match status" value="1"/>
</dbReference>
<dbReference type="PANTHER" id="PTHR30607:SF2">
    <property type="entry name" value="POTASSIUM-TRANSPORTING ATPASE POTASSIUM-BINDING SUBUNIT"/>
    <property type="match status" value="1"/>
</dbReference>
<dbReference type="Pfam" id="PF03814">
    <property type="entry name" value="KdpA"/>
    <property type="match status" value="1"/>
</dbReference>
<dbReference type="PIRSF" id="PIRSF001294">
    <property type="entry name" value="K_ATPaseA"/>
    <property type="match status" value="1"/>
</dbReference>